<dbReference type="EC" id="2.1.2.10" evidence="1"/>
<dbReference type="EMBL" id="AE015924">
    <property type="protein sequence ID" value="AAQ66593.1"/>
    <property type="molecule type" value="Genomic_DNA"/>
</dbReference>
<dbReference type="RefSeq" id="WP_005874565.1">
    <property type="nucleotide sequence ID" value="NC_002950.2"/>
</dbReference>
<dbReference type="SMR" id="Q7MUG4"/>
<dbReference type="STRING" id="242619.PG_1559"/>
<dbReference type="EnsemblBacteria" id="AAQ66593">
    <property type="protein sequence ID" value="AAQ66593"/>
    <property type="gene ID" value="PG_1559"/>
</dbReference>
<dbReference type="GeneID" id="29255779"/>
<dbReference type="KEGG" id="pgi:PG_1559"/>
<dbReference type="eggNOG" id="COG0404">
    <property type="taxonomic scope" value="Bacteria"/>
</dbReference>
<dbReference type="HOGENOM" id="CLU_007884_10_2_10"/>
<dbReference type="Proteomes" id="UP000000588">
    <property type="component" value="Chromosome"/>
</dbReference>
<dbReference type="GO" id="GO:0005829">
    <property type="term" value="C:cytosol"/>
    <property type="evidence" value="ECO:0007669"/>
    <property type="project" value="TreeGrafter"/>
</dbReference>
<dbReference type="GO" id="GO:0005960">
    <property type="term" value="C:glycine cleavage complex"/>
    <property type="evidence" value="ECO:0007669"/>
    <property type="project" value="InterPro"/>
</dbReference>
<dbReference type="GO" id="GO:0004047">
    <property type="term" value="F:aminomethyltransferase activity"/>
    <property type="evidence" value="ECO:0007669"/>
    <property type="project" value="UniProtKB-UniRule"/>
</dbReference>
<dbReference type="GO" id="GO:0008483">
    <property type="term" value="F:transaminase activity"/>
    <property type="evidence" value="ECO:0007669"/>
    <property type="project" value="UniProtKB-KW"/>
</dbReference>
<dbReference type="GO" id="GO:0019464">
    <property type="term" value="P:glycine decarboxylation via glycine cleavage system"/>
    <property type="evidence" value="ECO:0007669"/>
    <property type="project" value="UniProtKB-UniRule"/>
</dbReference>
<dbReference type="FunFam" id="2.40.30.110:FF:000003">
    <property type="entry name" value="Aminomethyltransferase"/>
    <property type="match status" value="1"/>
</dbReference>
<dbReference type="FunFam" id="3.30.70.1400:FF:000001">
    <property type="entry name" value="Aminomethyltransferase"/>
    <property type="match status" value="1"/>
</dbReference>
<dbReference type="Gene3D" id="2.40.30.110">
    <property type="entry name" value="Aminomethyltransferase beta-barrel domains"/>
    <property type="match status" value="1"/>
</dbReference>
<dbReference type="Gene3D" id="3.30.70.1400">
    <property type="entry name" value="Aminomethyltransferase beta-barrel domains"/>
    <property type="match status" value="1"/>
</dbReference>
<dbReference type="Gene3D" id="4.10.1250.10">
    <property type="entry name" value="Aminomethyltransferase fragment"/>
    <property type="match status" value="1"/>
</dbReference>
<dbReference type="Gene3D" id="3.30.1360.120">
    <property type="entry name" value="Probable tRNA modification gtpase trme, domain 1"/>
    <property type="match status" value="1"/>
</dbReference>
<dbReference type="HAMAP" id="MF_00259">
    <property type="entry name" value="GcvT"/>
    <property type="match status" value="1"/>
</dbReference>
<dbReference type="InterPro" id="IPR006223">
    <property type="entry name" value="GCS_T"/>
</dbReference>
<dbReference type="InterPro" id="IPR022903">
    <property type="entry name" value="GCS_T_bac"/>
</dbReference>
<dbReference type="InterPro" id="IPR013977">
    <property type="entry name" value="GCST_C"/>
</dbReference>
<dbReference type="InterPro" id="IPR006222">
    <property type="entry name" value="GCV_T_N"/>
</dbReference>
<dbReference type="InterPro" id="IPR028896">
    <property type="entry name" value="GcvT/YgfZ/DmdA"/>
</dbReference>
<dbReference type="InterPro" id="IPR029043">
    <property type="entry name" value="GcvT/YgfZ_C"/>
</dbReference>
<dbReference type="InterPro" id="IPR027266">
    <property type="entry name" value="TrmE/GcvT_dom1"/>
</dbReference>
<dbReference type="NCBIfam" id="TIGR00528">
    <property type="entry name" value="gcvT"/>
    <property type="match status" value="1"/>
</dbReference>
<dbReference type="NCBIfam" id="NF001567">
    <property type="entry name" value="PRK00389.1"/>
    <property type="match status" value="1"/>
</dbReference>
<dbReference type="PANTHER" id="PTHR43757">
    <property type="entry name" value="AMINOMETHYLTRANSFERASE"/>
    <property type="match status" value="1"/>
</dbReference>
<dbReference type="PANTHER" id="PTHR43757:SF2">
    <property type="entry name" value="AMINOMETHYLTRANSFERASE, MITOCHONDRIAL"/>
    <property type="match status" value="1"/>
</dbReference>
<dbReference type="Pfam" id="PF01571">
    <property type="entry name" value="GCV_T"/>
    <property type="match status" value="1"/>
</dbReference>
<dbReference type="Pfam" id="PF08669">
    <property type="entry name" value="GCV_T_C"/>
    <property type="match status" value="1"/>
</dbReference>
<dbReference type="PIRSF" id="PIRSF006487">
    <property type="entry name" value="GcvT"/>
    <property type="match status" value="1"/>
</dbReference>
<dbReference type="SUPFAM" id="SSF101790">
    <property type="entry name" value="Aminomethyltransferase beta-barrel domain"/>
    <property type="match status" value="1"/>
</dbReference>
<dbReference type="SUPFAM" id="SSF103025">
    <property type="entry name" value="Folate-binding domain"/>
    <property type="match status" value="1"/>
</dbReference>
<name>GCST_PORGI</name>
<accession>Q7MUG4</accession>
<feature type="chain" id="PRO_0000122581" description="Aminomethyltransferase">
    <location>
        <begin position="1"/>
        <end position="362"/>
    </location>
</feature>
<organism>
    <name type="scientific">Porphyromonas gingivalis (strain ATCC BAA-308 / W83)</name>
    <dbReference type="NCBI Taxonomy" id="242619"/>
    <lineage>
        <taxon>Bacteria</taxon>
        <taxon>Pseudomonadati</taxon>
        <taxon>Bacteroidota</taxon>
        <taxon>Bacteroidia</taxon>
        <taxon>Bacteroidales</taxon>
        <taxon>Porphyromonadaceae</taxon>
        <taxon>Porphyromonas</taxon>
    </lineage>
</organism>
<comment type="function">
    <text evidence="1">The glycine cleavage system catalyzes the degradation of glycine.</text>
</comment>
<comment type="catalytic activity">
    <reaction evidence="1">
        <text>N(6)-[(R)-S(8)-aminomethyldihydrolipoyl]-L-lysyl-[protein] + (6S)-5,6,7,8-tetrahydrofolate = N(6)-[(R)-dihydrolipoyl]-L-lysyl-[protein] + (6R)-5,10-methylene-5,6,7,8-tetrahydrofolate + NH4(+)</text>
        <dbReference type="Rhea" id="RHEA:16945"/>
        <dbReference type="Rhea" id="RHEA-COMP:10475"/>
        <dbReference type="Rhea" id="RHEA-COMP:10492"/>
        <dbReference type="ChEBI" id="CHEBI:15636"/>
        <dbReference type="ChEBI" id="CHEBI:28938"/>
        <dbReference type="ChEBI" id="CHEBI:57453"/>
        <dbReference type="ChEBI" id="CHEBI:83100"/>
        <dbReference type="ChEBI" id="CHEBI:83143"/>
        <dbReference type="EC" id="2.1.2.10"/>
    </reaction>
</comment>
<comment type="subunit">
    <text evidence="1">The glycine cleavage system is composed of four proteins: P, T, L and H.</text>
</comment>
<comment type="similarity">
    <text evidence="1">Belongs to the GcvT family.</text>
</comment>
<proteinExistence type="inferred from homology"/>
<reference key="1">
    <citation type="journal article" date="2003" name="J. Bacteriol.">
        <title>Complete genome sequence of the oral pathogenic bacterium Porphyromonas gingivalis strain W83.</title>
        <authorList>
            <person name="Nelson K.E."/>
            <person name="Fleischmann R.D."/>
            <person name="DeBoy R.T."/>
            <person name="Paulsen I.T."/>
            <person name="Fouts D.E."/>
            <person name="Eisen J.A."/>
            <person name="Daugherty S.C."/>
            <person name="Dodson R.J."/>
            <person name="Durkin A.S."/>
            <person name="Gwinn M.L."/>
            <person name="Haft D.H."/>
            <person name="Kolonay J.F."/>
            <person name="Nelson W.C."/>
            <person name="Mason T.M."/>
            <person name="Tallon L."/>
            <person name="Gray J."/>
            <person name="Granger D."/>
            <person name="Tettelin H."/>
            <person name="Dong H."/>
            <person name="Galvin J.L."/>
            <person name="Duncan M.J."/>
            <person name="Dewhirst F.E."/>
            <person name="Fraser C.M."/>
        </authorList>
    </citation>
    <scope>NUCLEOTIDE SEQUENCE [LARGE SCALE GENOMIC DNA]</scope>
    <source>
        <strain>ATCC BAA-308 / W83</strain>
    </source>
</reference>
<protein>
    <recommendedName>
        <fullName evidence="1">Aminomethyltransferase</fullName>
        <ecNumber evidence="1">2.1.2.10</ecNumber>
    </recommendedName>
    <alternativeName>
        <fullName evidence="1">Glycine cleavage system T protein</fullName>
    </alternativeName>
</protein>
<evidence type="ECO:0000255" key="1">
    <source>
        <dbReference type="HAMAP-Rule" id="MF_00259"/>
    </source>
</evidence>
<gene>
    <name evidence="1" type="primary">gcvT</name>
    <name type="ordered locus">PG_1559</name>
</gene>
<sequence length="362" mass="40065">MKTTPFTDVHIALGAKMHEFAGYNMPIEYGGIIDEHMNVVNNVGVFDVSHMGEFWVKGPNALRFLQKVSSNDASKLAVGQVQYCCFPNNDGGIVDDFLLYRYEEEKYMMVPNAANIAKDWAWCRQQNTMGAILENASDNIAQLAVQGPKATEVMQRLTDIDLNEITYYTFKVGSFAGCPDVIISATGYTGAGGFELYFYPQYAQKIWDALFEAGKPEGIKPAGLGARDTLRLEMGFCLYGNDICDTTSPIEAGLGWITKFTDDKMDMPSRKIMEEQKAGGLKRKLVAFELKDKGIPRQHYEIANAEGQIIGEVTSGTMSPCLKKGIGMGYVATEFSKVGTELGIMVRGRQLKAEIVKPPFRK</sequence>
<keyword id="KW-0032">Aminotransferase</keyword>
<keyword id="KW-1185">Reference proteome</keyword>
<keyword id="KW-0808">Transferase</keyword>